<dbReference type="EC" id="1.3.1.90" evidence="1"/>
<dbReference type="EMBL" id="AK010138">
    <property type="protein sequence ID" value="BAB26724.1"/>
    <property type="molecule type" value="mRNA"/>
</dbReference>
<dbReference type="EMBL" id="BC109351">
    <property type="protein sequence ID" value="AAI09352.1"/>
    <property type="molecule type" value="mRNA"/>
</dbReference>
<dbReference type="CCDS" id="CCDS25865.1"/>
<dbReference type="RefSeq" id="NP_082278.1">
    <property type="nucleotide sequence ID" value="NM_028002.2"/>
</dbReference>
<dbReference type="SMR" id="Q32M08"/>
<dbReference type="BioGRID" id="215029">
    <property type="interactions" value="1"/>
</dbReference>
<dbReference type="FunCoup" id="Q32M08">
    <property type="interactions" value="980"/>
</dbReference>
<dbReference type="STRING" id="10090.ENSMUSP00000020977"/>
<dbReference type="PhosphoSitePlus" id="Q32M08"/>
<dbReference type="PaxDb" id="10090-ENSMUSP00000020977"/>
<dbReference type="ProteomicsDB" id="277639"/>
<dbReference type="Pumba" id="Q32M08"/>
<dbReference type="DNASU" id="71916"/>
<dbReference type="GeneID" id="71916"/>
<dbReference type="KEGG" id="mmu:71916"/>
<dbReference type="UCSC" id="uc007nhr.1">
    <property type="organism name" value="mouse"/>
</dbReference>
<dbReference type="AGR" id="MGI:1919166"/>
<dbReference type="CTD" id="11062"/>
<dbReference type="MGI" id="MGI:1919166">
    <property type="gene designation" value="Dus4l"/>
</dbReference>
<dbReference type="eggNOG" id="KOG2335">
    <property type="taxonomic scope" value="Eukaryota"/>
</dbReference>
<dbReference type="InParanoid" id="Q32M08"/>
<dbReference type="OrthoDB" id="9977870at2759"/>
<dbReference type="PhylomeDB" id="Q32M08"/>
<dbReference type="TreeFam" id="TF105618"/>
<dbReference type="BioGRID-ORCS" id="71916">
    <property type="hits" value="3 hits in 78 CRISPR screens"/>
</dbReference>
<dbReference type="PRO" id="PR:Q32M08"/>
<dbReference type="Proteomes" id="UP000000589">
    <property type="component" value="Unplaced"/>
</dbReference>
<dbReference type="RNAct" id="Q32M08">
    <property type="molecule type" value="protein"/>
</dbReference>
<dbReference type="GO" id="GO:0050660">
    <property type="term" value="F:flavin adenine dinucleotide binding"/>
    <property type="evidence" value="ECO:0007669"/>
    <property type="project" value="InterPro"/>
</dbReference>
<dbReference type="GO" id="GO:0102266">
    <property type="term" value="F:tRNA-dihydrouridine20a synthase activity"/>
    <property type="evidence" value="ECO:0007669"/>
    <property type="project" value="RHEA"/>
</dbReference>
<dbReference type="GO" id="GO:0102267">
    <property type="term" value="F:tRNA-dihydrouridine20b synthase activity"/>
    <property type="evidence" value="ECO:0007669"/>
    <property type="project" value="RHEA"/>
</dbReference>
<dbReference type="GO" id="GO:0002943">
    <property type="term" value="P:tRNA dihydrouridine synthesis"/>
    <property type="evidence" value="ECO:0000250"/>
    <property type="project" value="UniProtKB"/>
</dbReference>
<dbReference type="CDD" id="cd02801">
    <property type="entry name" value="DUS_like_FMN"/>
    <property type="match status" value="1"/>
</dbReference>
<dbReference type="FunFam" id="3.20.20.70:FF:000100">
    <property type="entry name" value="tRNA-dihydrouridine synthase"/>
    <property type="match status" value="1"/>
</dbReference>
<dbReference type="Gene3D" id="3.20.20.70">
    <property type="entry name" value="Aldolase class I"/>
    <property type="match status" value="1"/>
</dbReference>
<dbReference type="InterPro" id="IPR013785">
    <property type="entry name" value="Aldolase_TIM"/>
</dbReference>
<dbReference type="InterPro" id="IPR035587">
    <property type="entry name" value="DUS-like_FMN-bd"/>
</dbReference>
<dbReference type="InterPro" id="IPR001269">
    <property type="entry name" value="DUS_fam"/>
</dbReference>
<dbReference type="InterPro" id="IPR018517">
    <property type="entry name" value="tRNA_hU_synthase_CS"/>
</dbReference>
<dbReference type="PANTHER" id="PTHR11082">
    <property type="entry name" value="TRNA-DIHYDROURIDINE SYNTHASE"/>
    <property type="match status" value="1"/>
</dbReference>
<dbReference type="PANTHER" id="PTHR11082:SF31">
    <property type="entry name" value="TRNA-DIHYDROURIDINE(20A_20B) SYNTHASE [NAD(P)+]-LIKE"/>
    <property type="match status" value="1"/>
</dbReference>
<dbReference type="Pfam" id="PF01207">
    <property type="entry name" value="Dus"/>
    <property type="match status" value="1"/>
</dbReference>
<dbReference type="PIRSF" id="PIRSF006621">
    <property type="entry name" value="Dus"/>
    <property type="match status" value="1"/>
</dbReference>
<dbReference type="SUPFAM" id="SSF51395">
    <property type="entry name" value="FMN-linked oxidoreductases"/>
    <property type="match status" value="1"/>
</dbReference>
<dbReference type="PROSITE" id="PS01136">
    <property type="entry name" value="UPF0034"/>
    <property type="match status" value="1"/>
</dbReference>
<protein>
    <recommendedName>
        <fullName>tRNA-dihydrouridine(20a/20b) synthase [NAD(P)+]-like</fullName>
        <ecNumber evidence="1">1.3.1.90</ecNumber>
    </recommendedName>
    <alternativeName>
        <fullName>tRNA-dihydrouridine synthase 4-like</fullName>
    </alternativeName>
</protein>
<sequence>MRSDSLPTTICQERKKDPIEMFHSGQLVKVCAPMVRYSKLAFRTLVRKYSCDLCYTPMIIAADFVRSIKARDSEFTTNQGDCPLIVQFAANDARLLSDAALLVCPYANGIDINCGCPQRWAMADGYGACLINKPELVHDMVRQVRNRVESPRFSVSIKIRIHDDLARTIDLCRKAEATGVSWITVHGRTVEERHQPVHYDAIKMIKENVSIPIVANGDIRSLKEAENVWQMTGTDGVMVARGLLANPAMFAGYEETPLKCIWDWVDISLELGTPFMCFHQHLMYMMEKITSRQEKRVFNALSSTSAVLDYLTDHYGDESLSKSL</sequence>
<comment type="function">
    <text evidence="1">Catalyzes the synthesis of dihydrouridine, a modified base found in the D-loop of most tRNAs.</text>
</comment>
<comment type="catalytic activity">
    <reaction evidence="1">
        <text>5,6-dihydrouridine(20a) in tRNA + NADP(+) = uridine(20a) in tRNA + NADPH + H(+)</text>
        <dbReference type="Rhea" id="RHEA:53344"/>
        <dbReference type="Rhea" id="RHEA-COMP:13535"/>
        <dbReference type="Rhea" id="RHEA-COMP:13536"/>
        <dbReference type="ChEBI" id="CHEBI:15378"/>
        <dbReference type="ChEBI" id="CHEBI:57783"/>
        <dbReference type="ChEBI" id="CHEBI:58349"/>
        <dbReference type="ChEBI" id="CHEBI:65315"/>
        <dbReference type="ChEBI" id="CHEBI:74443"/>
        <dbReference type="EC" id="1.3.1.90"/>
    </reaction>
    <physiologicalReaction direction="right-to-left" evidence="1">
        <dbReference type="Rhea" id="RHEA:53346"/>
    </physiologicalReaction>
</comment>
<comment type="catalytic activity">
    <reaction evidence="1">
        <text>5,6-dihydrouridine(20a) in tRNA + NAD(+) = uridine(20a) in tRNA + NADH + H(+)</text>
        <dbReference type="Rhea" id="RHEA:53348"/>
        <dbReference type="Rhea" id="RHEA-COMP:13535"/>
        <dbReference type="Rhea" id="RHEA-COMP:13536"/>
        <dbReference type="ChEBI" id="CHEBI:15378"/>
        <dbReference type="ChEBI" id="CHEBI:57540"/>
        <dbReference type="ChEBI" id="CHEBI:57945"/>
        <dbReference type="ChEBI" id="CHEBI:65315"/>
        <dbReference type="ChEBI" id="CHEBI:74443"/>
        <dbReference type="EC" id="1.3.1.90"/>
    </reaction>
    <physiologicalReaction direction="right-to-left" evidence="1">
        <dbReference type="Rhea" id="RHEA:53350"/>
    </physiologicalReaction>
</comment>
<comment type="catalytic activity">
    <reaction evidence="2">
        <text>5,6-dihydrouridine(20b) in tRNA + NAD(+) = uridine(20b) in tRNA + NADH + H(+)</text>
        <dbReference type="Rhea" id="RHEA:53352"/>
        <dbReference type="Rhea" id="RHEA-COMP:13537"/>
        <dbReference type="Rhea" id="RHEA-COMP:13538"/>
        <dbReference type="ChEBI" id="CHEBI:15378"/>
        <dbReference type="ChEBI" id="CHEBI:57540"/>
        <dbReference type="ChEBI" id="CHEBI:57945"/>
        <dbReference type="ChEBI" id="CHEBI:65315"/>
        <dbReference type="ChEBI" id="CHEBI:74443"/>
        <dbReference type="EC" id="1.3.1.90"/>
    </reaction>
    <physiologicalReaction direction="right-to-left" evidence="2">
        <dbReference type="Rhea" id="RHEA:53354"/>
    </physiologicalReaction>
</comment>
<comment type="catalytic activity">
    <reaction evidence="2">
        <text>5,6-dihydrouridine(20b) in tRNA + NADP(+) = uridine(20b) in tRNA + NADPH + H(+)</text>
        <dbReference type="Rhea" id="RHEA:53356"/>
        <dbReference type="Rhea" id="RHEA-COMP:13537"/>
        <dbReference type="Rhea" id="RHEA-COMP:13538"/>
        <dbReference type="ChEBI" id="CHEBI:15378"/>
        <dbReference type="ChEBI" id="CHEBI:57783"/>
        <dbReference type="ChEBI" id="CHEBI:58349"/>
        <dbReference type="ChEBI" id="CHEBI:65315"/>
        <dbReference type="ChEBI" id="CHEBI:74443"/>
        <dbReference type="EC" id="1.3.1.90"/>
    </reaction>
    <physiologicalReaction direction="right-to-left" evidence="2">
        <dbReference type="Rhea" id="RHEA:53358"/>
    </physiologicalReaction>
</comment>
<comment type="cofactor">
    <cofactor evidence="3">
        <name>FMN</name>
        <dbReference type="ChEBI" id="CHEBI:58210"/>
    </cofactor>
</comment>
<comment type="similarity">
    <text evidence="4">Belongs to the Dus family. Dus4 subfamily.</text>
</comment>
<gene>
    <name type="primary">Dus4l</name>
</gene>
<feature type="chain" id="PRO_0000247348" description="tRNA-dihydrouridine(20a/20b) synthase [NAD(P)+]-like">
    <location>
        <begin position="1"/>
        <end position="324"/>
    </location>
</feature>
<feature type="active site" description="Proton donor" evidence="3">
    <location>
        <position position="116"/>
    </location>
</feature>
<feature type="binding site" evidence="3">
    <location>
        <begin position="33"/>
        <end position="35"/>
    </location>
    <ligand>
        <name>FMN</name>
        <dbReference type="ChEBI" id="CHEBI:58210"/>
    </ligand>
</feature>
<feature type="binding site" evidence="3">
    <location>
        <position position="87"/>
    </location>
    <ligand>
        <name>FMN</name>
        <dbReference type="ChEBI" id="CHEBI:58210"/>
    </ligand>
</feature>
<feature type="binding site" evidence="3">
    <location>
        <position position="158"/>
    </location>
    <ligand>
        <name>FMN</name>
        <dbReference type="ChEBI" id="CHEBI:58210"/>
    </ligand>
</feature>
<feature type="binding site" evidence="3">
    <location>
        <position position="186"/>
    </location>
    <ligand>
        <name>FMN</name>
        <dbReference type="ChEBI" id="CHEBI:58210"/>
    </ligand>
</feature>
<feature type="binding site" evidence="3">
    <location>
        <begin position="216"/>
        <end position="218"/>
    </location>
    <ligand>
        <name>FMN</name>
        <dbReference type="ChEBI" id="CHEBI:58210"/>
    </ligand>
</feature>
<feature type="binding site" evidence="3">
    <location>
        <begin position="240"/>
        <end position="241"/>
    </location>
    <ligand>
        <name>FMN</name>
        <dbReference type="ChEBI" id="CHEBI:58210"/>
    </ligand>
</feature>
<feature type="sequence conflict" description="In Ref. 1; BAB26724." evidence="4" ref="1">
    <original>A</original>
    <variation>T</variation>
    <location>
        <position position="245"/>
    </location>
</feature>
<evidence type="ECO:0000250" key="1">
    <source>
        <dbReference type="UniProtKB" id="O95620"/>
    </source>
</evidence>
<evidence type="ECO:0000250" key="2">
    <source>
        <dbReference type="UniProtKB" id="Q06063"/>
    </source>
</evidence>
<evidence type="ECO:0000250" key="3">
    <source>
        <dbReference type="UniProtKB" id="Q5SMC7"/>
    </source>
</evidence>
<evidence type="ECO:0000305" key="4"/>
<name>DUS4L_MOUSE</name>
<organism>
    <name type="scientific">Mus musculus</name>
    <name type="common">Mouse</name>
    <dbReference type="NCBI Taxonomy" id="10090"/>
    <lineage>
        <taxon>Eukaryota</taxon>
        <taxon>Metazoa</taxon>
        <taxon>Chordata</taxon>
        <taxon>Craniata</taxon>
        <taxon>Vertebrata</taxon>
        <taxon>Euteleostomi</taxon>
        <taxon>Mammalia</taxon>
        <taxon>Eutheria</taxon>
        <taxon>Euarchontoglires</taxon>
        <taxon>Glires</taxon>
        <taxon>Rodentia</taxon>
        <taxon>Myomorpha</taxon>
        <taxon>Muroidea</taxon>
        <taxon>Muridae</taxon>
        <taxon>Murinae</taxon>
        <taxon>Mus</taxon>
        <taxon>Mus</taxon>
    </lineage>
</organism>
<keyword id="KW-0285">Flavoprotein</keyword>
<keyword id="KW-0288">FMN</keyword>
<keyword id="KW-0560">Oxidoreductase</keyword>
<keyword id="KW-1185">Reference proteome</keyword>
<keyword id="KW-0819">tRNA processing</keyword>
<reference key="1">
    <citation type="journal article" date="2005" name="Science">
        <title>The transcriptional landscape of the mammalian genome.</title>
        <authorList>
            <person name="Carninci P."/>
            <person name="Kasukawa T."/>
            <person name="Katayama S."/>
            <person name="Gough J."/>
            <person name="Frith M.C."/>
            <person name="Maeda N."/>
            <person name="Oyama R."/>
            <person name="Ravasi T."/>
            <person name="Lenhard B."/>
            <person name="Wells C."/>
            <person name="Kodzius R."/>
            <person name="Shimokawa K."/>
            <person name="Bajic V.B."/>
            <person name="Brenner S.E."/>
            <person name="Batalov S."/>
            <person name="Forrest A.R."/>
            <person name="Zavolan M."/>
            <person name="Davis M.J."/>
            <person name="Wilming L.G."/>
            <person name="Aidinis V."/>
            <person name="Allen J.E."/>
            <person name="Ambesi-Impiombato A."/>
            <person name="Apweiler R."/>
            <person name="Aturaliya R.N."/>
            <person name="Bailey T.L."/>
            <person name="Bansal M."/>
            <person name="Baxter L."/>
            <person name="Beisel K.W."/>
            <person name="Bersano T."/>
            <person name="Bono H."/>
            <person name="Chalk A.M."/>
            <person name="Chiu K.P."/>
            <person name="Choudhary V."/>
            <person name="Christoffels A."/>
            <person name="Clutterbuck D.R."/>
            <person name="Crowe M.L."/>
            <person name="Dalla E."/>
            <person name="Dalrymple B.P."/>
            <person name="de Bono B."/>
            <person name="Della Gatta G."/>
            <person name="di Bernardo D."/>
            <person name="Down T."/>
            <person name="Engstrom P."/>
            <person name="Fagiolini M."/>
            <person name="Faulkner G."/>
            <person name="Fletcher C.F."/>
            <person name="Fukushima T."/>
            <person name="Furuno M."/>
            <person name="Futaki S."/>
            <person name="Gariboldi M."/>
            <person name="Georgii-Hemming P."/>
            <person name="Gingeras T.R."/>
            <person name="Gojobori T."/>
            <person name="Green R.E."/>
            <person name="Gustincich S."/>
            <person name="Harbers M."/>
            <person name="Hayashi Y."/>
            <person name="Hensch T.K."/>
            <person name="Hirokawa N."/>
            <person name="Hill D."/>
            <person name="Huminiecki L."/>
            <person name="Iacono M."/>
            <person name="Ikeo K."/>
            <person name="Iwama A."/>
            <person name="Ishikawa T."/>
            <person name="Jakt M."/>
            <person name="Kanapin A."/>
            <person name="Katoh M."/>
            <person name="Kawasawa Y."/>
            <person name="Kelso J."/>
            <person name="Kitamura H."/>
            <person name="Kitano H."/>
            <person name="Kollias G."/>
            <person name="Krishnan S.P."/>
            <person name="Kruger A."/>
            <person name="Kummerfeld S.K."/>
            <person name="Kurochkin I.V."/>
            <person name="Lareau L.F."/>
            <person name="Lazarevic D."/>
            <person name="Lipovich L."/>
            <person name="Liu J."/>
            <person name="Liuni S."/>
            <person name="McWilliam S."/>
            <person name="Madan Babu M."/>
            <person name="Madera M."/>
            <person name="Marchionni L."/>
            <person name="Matsuda H."/>
            <person name="Matsuzawa S."/>
            <person name="Miki H."/>
            <person name="Mignone F."/>
            <person name="Miyake S."/>
            <person name="Morris K."/>
            <person name="Mottagui-Tabar S."/>
            <person name="Mulder N."/>
            <person name="Nakano N."/>
            <person name="Nakauchi H."/>
            <person name="Ng P."/>
            <person name="Nilsson R."/>
            <person name="Nishiguchi S."/>
            <person name="Nishikawa S."/>
            <person name="Nori F."/>
            <person name="Ohara O."/>
            <person name="Okazaki Y."/>
            <person name="Orlando V."/>
            <person name="Pang K.C."/>
            <person name="Pavan W.J."/>
            <person name="Pavesi G."/>
            <person name="Pesole G."/>
            <person name="Petrovsky N."/>
            <person name="Piazza S."/>
            <person name="Reed J."/>
            <person name="Reid J.F."/>
            <person name="Ring B.Z."/>
            <person name="Ringwald M."/>
            <person name="Rost B."/>
            <person name="Ruan Y."/>
            <person name="Salzberg S.L."/>
            <person name="Sandelin A."/>
            <person name="Schneider C."/>
            <person name="Schoenbach C."/>
            <person name="Sekiguchi K."/>
            <person name="Semple C.A."/>
            <person name="Seno S."/>
            <person name="Sessa L."/>
            <person name="Sheng Y."/>
            <person name="Shibata Y."/>
            <person name="Shimada H."/>
            <person name="Shimada K."/>
            <person name="Silva D."/>
            <person name="Sinclair B."/>
            <person name="Sperling S."/>
            <person name="Stupka E."/>
            <person name="Sugiura K."/>
            <person name="Sultana R."/>
            <person name="Takenaka Y."/>
            <person name="Taki K."/>
            <person name="Tammoja K."/>
            <person name="Tan S.L."/>
            <person name="Tang S."/>
            <person name="Taylor M.S."/>
            <person name="Tegner J."/>
            <person name="Teichmann S.A."/>
            <person name="Ueda H.R."/>
            <person name="van Nimwegen E."/>
            <person name="Verardo R."/>
            <person name="Wei C.L."/>
            <person name="Yagi K."/>
            <person name="Yamanishi H."/>
            <person name="Zabarovsky E."/>
            <person name="Zhu S."/>
            <person name="Zimmer A."/>
            <person name="Hide W."/>
            <person name="Bult C."/>
            <person name="Grimmond S.M."/>
            <person name="Teasdale R.D."/>
            <person name="Liu E.T."/>
            <person name="Brusic V."/>
            <person name="Quackenbush J."/>
            <person name="Wahlestedt C."/>
            <person name="Mattick J.S."/>
            <person name="Hume D.A."/>
            <person name="Kai C."/>
            <person name="Sasaki D."/>
            <person name="Tomaru Y."/>
            <person name="Fukuda S."/>
            <person name="Kanamori-Katayama M."/>
            <person name="Suzuki M."/>
            <person name="Aoki J."/>
            <person name="Arakawa T."/>
            <person name="Iida J."/>
            <person name="Imamura K."/>
            <person name="Itoh M."/>
            <person name="Kato T."/>
            <person name="Kawaji H."/>
            <person name="Kawagashira N."/>
            <person name="Kawashima T."/>
            <person name="Kojima M."/>
            <person name="Kondo S."/>
            <person name="Konno H."/>
            <person name="Nakano K."/>
            <person name="Ninomiya N."/>
            <person name="Nishio T."/>
            <person name="Okada M."/>
            <person name="Plessy C."/>
            <person name="Shibata K."/>
            <person name="Shiraki T."/>
            <person name="Suzuki S."/>
            <person name="Tagami M."/>
            <person name="Waki K."/>
            <person name="Watahiki A."/>
            <person name="Okamura-Oho Y."/>
            <person name="Suzuki H."/>
            <person name="Kawai J."/>
            <person name="Hayashizaki Y."/>
        </authorList>
    </citation>
    <scope>NUCLEOTIDE SEQUENCE [LARGE SCALE MRNA]</scope>
    <source>
        <strain>C57BL/6J</strain>
        <tissue>Tongue</tissue>
    </source>
</reference>
<reference key="2">
    <citation type="journal article" date="2004" name="Genome Res.">
        <title>The status, quality, and expansion of the NIH full-length cDNA project: the Mammalian Gene Collection (MGC).</title>
        <authorList>
            <consortium name="The MGC Project Team"/>
        </authorList>
    </citation>
    <scope>NUCLEOTIDE SEQUENCE [LARGE SCALE MRNA]</scope>
</reference>
<proteinExistence type="evidence at transcript level"/>
<accession>Q32M08</accession>
<accession>Q9D6P4</accession>